<gene>
    <name evidence="1" type="primary">kptA</name>
    <name type="ordered locus">MM_1298</name>
</gene>
<accession>Q8PXC3</accession>
<keyword id="KW-0520">NAD</keyword>
<keyword id="KW-0808">Transferase</keyword>
<dbReference type="EC" id="2.7.1.-" evidence="1"/>
<dbReference type="EMBL" id="AE008384">
    <property type="protein sequence ID" value="AAM30994.1"/>
    <property type="molecule type" value="Genomic_DNA"/>
</dbReference>
<dbReference type="RefSeq" id="WP_011033245.1">
    <property type="nucleotide sequence ID" value="NC_003901.1"/>
</dbReference>
<dbReference type="SMR" id="Q8PXC3"/>
<dbReference type="KEGG" id="mma:MM_1298"/>
<dbReference type="PATRIC" id="fig|192952.21.peg.1509"/>
<dbReference type="eggNOG" id="arCOG04063">
    <property type="taxonomic scope" value="Archaea"/>
</dbReference>
<dbReference type="HOGENOM" id="CLU_052998_4_1_2"/>
<dbReference type="Proteomes" id="UP000000595">
    <property type="component" value="Chromosome"/>
</dbReference>
<dbReference type="GO" id="GO:0003950">
    <property type="term" value="F:NAD+ poly-ADP-ribosyltransferase activity"/>
    <property type="evidence" value="ECO:0007669"/>
    <property type="project" value="InterPro"/>
</dbReference>
<dbReference type="GO" id="GO:0000215">
    <property type="term" value="F:tRNA 2'-phosphotransferase activity"/>
    <property type="evidence" value="ECO:0007669"/>
    <property type="project" value="TreeGrafter"/>
</dbReference>
<dbReference type="GO" id="GO:0006388">
    <property type="term" value="P:tRNA splicing, via endonucleolytic cleavage and ligation"/>
    <property type="evidence" value="ECO:0007669"/>
    <property type="project" value="UniProtKB-UniRule"/>
</dbReference>
<dbReference type="Gene3D" id="3.20.170.30">
    <property type="match status" value="1"/>
</dbReference>
<dbReference type="Gene3D" id="1.10.10.970">
    <property type="entry name" value="RNA 2'-phosphotransferase, Tpt1/KptA family, N-terminal domain"/>
    <property type="match status" value="1"/>
</dbReference>
<dbReference type="HAMAP" id="MF_00299">
    <property type="entry name" value="KptA"/>
    <property type="match status" value="1"/>
</dbReference>
<dbReference type="InterPro" id="IPR002745">
    <property type="entry name" value="Ptrans_KptA/Tpt1"/>
</dbReference>
<dbReference type="InterPro" id="IPR042081">
    <property type="entry name" value="RNA_2'-PTrans_C"/>
</dbReference>
<dbReference type="InterPro" id="IPR022928">
    <property type="entry name" value="RNA_2'-PTrans_KptA"/>
</dbReference>
<dbReference type="InterPro" id="IPR042080">
    <property type="entry name" value="RNA_2'-PTrans_N"/>
</dbReference>
<dbReference type="NCBIfam" id="NF002015">
    <property type="entry name" value="PRK00819.1-5"/>
    <property type="match status" value="1"/>
</dbReference>
<dbReference type="PANTHER" id="PTHR12684">
    <property type="entry name" value="PUTATIVE PHOSPHOTRANSFERASE"/>
    <property type="match status" value="1"/>
</dbReference>
<dbReference type="PANTHER" id="PTHR12684:SF2">
    <property type="entry name" value="TRNA 2'-PHOSPHOTRANSFERASE 1"/>
    <property type="match status" value="1"/>
</dbReference>
<dbReference type="Pfam" id="PF01885">
    <property type="entry name" value="PTS_2-RNA"/>
    <property type="match status" value="1"/>
</dbReference>
<dbReference type="SUPFAM" id="SSF56399">
    <property type="entry name" value="ADP-ribosylation"/>
    <property type="match status" value="1"/>
</dbReference>
<organism>
    <name type="scientific">Methanosarcina mazei (strain ATCC BAA-159 / DSM 3647 / Goe1 / Go1 / JCM 11833 / OCM 88)</name>
    <name type="common">Methanosarcina frisia</name>
    <dbReference type="NCBI Taxonomy" id="192952"/>
    <lineage>
        <taxon>Archaea</taxon>
        <taxon>Methanobacteriati</taxon>
        <taxon>Methanobacteriota</taxon>
        <taxon>Stenosarchaea group</taxon>
        <taxon>Methanomicrobia</taxon>
        <taxon>Methanosarcinales</taxon>
        <taxon>Methanosarcinaceae</taxon>
        <taxon>Methanosarcina</taxon>
    </lineage>
</organism>
<name>KPTA_METMA</name>
<comment type="function">
    <text evidence="1">Removes the 2'-phosphate from RNA via an intermediate in which the phosphate is ADP-ribosylated by NAD followed by a presumed transesterification to release the RNA and generate ADP-ribose 1''-2''-cyclic phosphate (APPR&gt;P). May function as an ADP-ribosylase.</text>
</comment>
<comment type="similarity">
    <text evidence="1">Belongs to the KptA/TPT1 family.</text>
</comment>
<protein>
    <recommendedName>
        <fullName evidence="1">Probable RNA 2'-phosphotransferase</fullName>
        <ecNumber evidence="1">2.7.1.-</ecNumber>
    </recommendedName>
</protein>
<proteinExistence type="inferred from homology"/>
<feature type="chain" id="PRO_0000157489" description="Probable RNA 2'-phosphotransferase">
    <location>
        <begin position="1"/>
        <end position="207"/>
    </location>
</feature>
<evidence type="ECO:0000255" key="1">
    <source>
        <dbReference type="HAMAP-Rule" id="MF_00299"/>
    </source>
</evidence>
<sequence length="207" mass="23845">MIRKCTDHGYFRGGSCQQCKRPGRYVLDDGREEKLGRFVSGTLRHFPASAGVKMDKYGWIDLNAFCEVMKKRYNWMRKEYLYALVESDEKGRYQISGPMIRARYGHSVNVDLDYDESDTPYVYYGASPEEVDVLLENGIFPIKQRYVHLSTTYEKAAEVALIHTESPVILQVDAFRAQEDGISLKLATDYIVLAEKIPPDYLFVLED</sequence>
<reference key="1">
    <citation type="journal article" date="2002" name="J. Mol. Microbiol. Biotechnol.">
        <title>The genome of Methanosarcina mazei: evidence for lateral gene transfer between Bacteria and Archaea.</title>
        <authorList>
            <person name="Deppenmeier U."/>
            <person name="Johann A."/>
            <person name="Hartsch T."/>
            <person name="Merkl R."/>
            <person name="Schmitz R.A."/>
            <person name="Martinez-Arias R."/>
            <person name="Henne A."/>
            <person name="Wiezer A."/>
            <person name="Baeumer S."/>
            <person name="Jacobi C."/>
            <person name="Brueggemann H."/>
            <person name="Lienard T."/>
            <person name="Christmann A."/>
            <person name="Boemecke M."/>
            <person name="Steckel S."/>
            <person name="Bhattacharyya A."/>
            <person name="Lykidis A."/>
            <person name="Overbeek R."/>
            <person name="Klenk H.-P."/>
            <person name="Gunsalus R.P."/>
            <person name="Fritz H.-J."/>
            <person name="Gottschalk G."/>
        </authorList>
    </citation>
    <scope>NUCLEOTIDE SEQUENCE [LARGE SCALE GENOMIC DNA]</scope>
    <source>
        <strain>ATCC BAA-159 / DSM 3647 / Goe1 / Go1 / JCM 11833 / OCM 88</strain>
    </source>
</reference>